<comment type="function">
    <text evidence="1">Required for the first step of diphthamide biosynthesis, a post-translational modification of histidine which occurs in elongation factor 2. Dph1 and dph2 transfer a 3-amino-3-carboxypropyl (ACP) group from S-adenosyl-L-methionine (SAM) to a histidine residue, the reaction is assisted by a reduction system comprising dph3 and a NADH-dependent reductase, predominantly cbr1 (By similarity). Facilitates the reduction of the catalytic iron-sulfur cluster found in the dph1 subunit (By similarity).</text>
</comment>
<comment type="cofactor">
    <cofactor evidence="1">
        <name>[4Fe-4S] cluster</name>
        <dbReference type="ChEBI" id="CHEBI:49883"/>
    </cofactor>
    <text evidence="1">Binds 1 [4Fe-4S] cluster per subunit. The cluster facilitates the reduction of the catalytic iron-sulfur cluster in the dph1 subunit.</text>
</comment>
<comment type="pathway">
    <text evidence="1">Protein modification; peptidyl-diphthamide biosynthesis.</text>
</comment>
<comment type="subunit">
    <text evidence="1">Component of the 2-(3-amino-3-carboxypropyl)histidine synthase complex composed of dph1, dph2, dph3 and a NADH-dependent reductase, predominantly cbr1.</text>
</comment>
<comment type="subcellular location">
    <subcellularLocation>
        <location evidence="1">Cytoplasm</location>
    </subcellularLocation>
</comment>
<comment type="similarity">
    <text evidence="3">Belongs to the DPH1/DPH2 family. DPH2 subfamily.</text>
</comment>
<dbReference type="EMBL" id="CU329671">
    <property type="protein sequence ID" value="CAA20426.1"/>
    <property type="molecule type" value="Genomic_DNA"/>
</dbReference>
<dbReference type="PIR" id="T39705">
    <property type="entry name" value="S67390"/>
</dbReference>
<dbReference type="RefSeq" id="NP_596384.1">
    <property type="nucleotide sequence ID" value="NM_001022305.2"/>
</dbReference>
<dbReference type="SMR" id="Q10206"/>
<dbReference type="BioGRID" id="276338">
    <property type="interactions" value="16"/>
</dbReference>
<dbReference type="FunCoup" id="Q10206">
    <property type="interactions" value="777"/>
</dbReference>
<dbReference type="STRING" id="284812.Q10206"/>
<dbReference type="iPTMnet" id="Q10206"/>
<dbReference type="PaxDb" id="4896-SPBC17D1.02.1"/>
<dbReference type="EnsemblFungi" id="SPBC17D1.02.1">
    <property type="protein sequence ID" value="SPBC17D1.02.1:pep"/>
    <property type="gene ID" value="SPBC17D1.02"/>
</dbReference>
<dbReference type="GeneID" id="2539788"/>
<dbReference type="KEGG" id="spo:2539788"/>
<dbReference type="PomBase" id="SPBC17D1.02">
    <property type="gene designation" value="dph2"/>
</dbReference>
<dbReference type="VEuPathDB" id="FungiDB:SPBC17D1.02"/>
<dbReference type="eggNOG" id="KOG2648">
    <property type="taxonomic scope" value="Eukaryota"/>
</dbReference>
<dbReference type="HOGENOM" id="CLU_015210_1_0_1"/>
<dbReference type="InParanoid" id="Q10206"/>
<dbReference type="OMA" id="QIWNENH"/>
<dbReference type="PhylomeDB" id="Q10206"/>
<dbReference type="Reactome" id="R-SPO-5358493">
    <property type="pathway name" value="Synthesis of diphthamide-EEF2"/>
</dbReference>
<dbReference type="UniPathway" id="UPA00559"/>
<dbReference type="PRO" id="PR:Q10206"/>
<dbReference type="Proteomes" id="UP000002485">
    <property type="component" value="Chromosome II"/>
</dbReference>
<dbReference type="GO" id="GO:0120513">
    <property type="term" value="C:2-(3-amino-3-carboxypropyl)histidine synthase complex"/>
    <property type="evidence" value="ECO:0000250"/>
    <property type="project" value="UniProtKB"/>
</dbReference>
<dbReference type="GO" id="GO:0005829">
    <property type="term" value="C:cytosol"/>
    <property type="evidence" value="ECO:0007005"/>
    <property type="project" value="PomBase"/>
</dbReference>
<dbReference type="GO" id="GO:0090560">
    <property type="term" value="F:2-(3-amino-3-carboxypropyl)histidine synthase activity"/>
    <property type="evidence" value="ECO:0007669"/>
    <property type="project" value="UniProtKB-EC"/>
</dbReference>
<dbReference type="GO" id="GO:0051539">
    <property type="term" value="F:4 iron, 4 sulfur cluster binding"/>
    <property type="evidence" value="ECO:0000250"/>
    <property type="project" value="UniProtKB"/>
</dbReference>
<dbReference type="GO" id="GO:0046872">
    <property type="term" value="F:metal ion binding"/>
    <property type="evidence" value="ECO:0007669"/>
    <property type="project" value="UniProtKB-KW"/>
</dbReference>
<dbReference type="GO" id="GO:0017183">
    <property type="term" value="P:protein histidyl modification to diphthamide"/>
    <property type="evidence" value="ECO:0000250"/>
    <property type="project" value="UniProtKB"/>
</dbReference>
<dbReference type="GO" id="GO:2000765">
    <property type="term" value="P:regulation of cytoplasmic translation"/>
    <property type="evidence" value="ECO:0000305"/>
    <property type="project" value="PomBase"/>
</dbReference>
<dbReference type="FunFam" id="3.40.50.11840:FF:000002">
    <property type="entry name" value="2-(3-amino-3-carboxypropyl)histidine synthase subunit 2"/>
    <property type="match status" value="1"/>
</dbReference>
<dbReference type="FunFam" id="3.40.50.11860:FF:000001">
    <property type="entry name" value="2-(3-amino-3-carboxypropyl)histidine synthase subunit 2"/>
    <property type="match status" value="1"/>
</dbReference>
<dbReference type="Gene3D" id="3.40.50.11840">
    <property type="entry name" value="Diphthamide synthesis DPH1/DPH2 domain 1"/>
    <property type="match status" value="1"/>
</dbReference>
<dbReference type="Gene3D" id="3.40.50.11860">
    <property type="entry name" value="Diphthamide synthesis DPH1/DPH2 domain 3"/>
    <property type="match status" value="1"/>
</dbReference>
<dbReference type="InterPro" id="IPR010014">
    <property type="entry name" value="DHP2"/>
</dbReference>
<dbReference type="InterPro" id="IPR016435">
    <property type="entry name" value="DPH1/DPH2"/>
</dbReference>
<dbReference type="InterPro" id="IPR042263">
    <property type="entry name" value="DPH1/DPH2_1"/>
</dbReference>
<dbReference type="InterPro" id="IPR042265">
    <property type="entry name" value="DPH1/DPH2_3"/>
</dbReference>
<dbReference type="NCBIfam" id="TIGR00322">
    <property type="entry name" value="diphth2_R"/>
    <property type="match status" value="1"/>
</dbReference>
<dbReference type="NCBIfam" id="TIGR00272">
    <property type="entry name" value="DPH2"/>
    <property type="match status" value="1"/>
</dbReference>
<dbReference type="PANTHER" id="PTHR10762:SF2">
    <property type="entry name" value="2-(3-AMINO-3-CARBOXYPROPYL)HISTIDINE SYNTHASE SUBUNIT 2"/>
    <property type="match status" value="1"/>
</dbReference>
<dbReference type="PANTHER" id="PTHR10762">
    <property type="entry name" value="DIPHTHAMIDE BIOSYNTHESIS PROTEIN"/>
    <property type="match status" value="1"/>
</dbReference>
<dbReference type="Pfam" id="PF01866">
    <property type="entry name" value="Diphthamide_syn"/>
    <property type="match status" value="1"/>
</dbReference>
<dbReference type="SFLD" id="SFLDG01121">
    <property type="entry name" value="Diphthamide_biosynthesis"/>
    <property type="match status" value="1"/>
</dbReference>
<dbReference type="SFLD" id="SFLDF00408">
    <property type="entry name" value="Diphthamide_biosynthesis_famil"/>
    <property type="match status" value="1"/>
</dbReference>
<dbReference type="SFLD" id="SFLDS00032">
    <property type="entry name" value="Radical_SAM_3-amino-3-carboxyp"/>
    <property type="match status" value="1"/>
</dbReference>
<proteinExistence type="inferred from homology"/>
<keyword id="KW-0963">Cytoplasm</keyword>
<keyword id="KW-0408">Iron</keyword>
<keyword id="KW-0411">Iron-sulfur</keyword>
<keyword id="KW-0479">Metal-binding</keyword>
<keyword id="KW-1185">Reference proteome</keyword>
<reference key="1">
    <citation type="journal article" date="2002" name="Nature">
        <title>The genome sequence of Schizosaccharomyces pombe.</title>
        <authorList>
            <person name="Wood V."/>
            <person name="Gwilliam R."/>
            <person name="Rajandream M.A."/>
            <person name="Lyne M.H."/>
            <person name="Lyne R."/>
            <person name="Stewart A."/>
            <person name="Sgouros J.G."/>
            <person name="Peat N."/>
            <person name="Hayles J."/>
            <person name="Baker S.G."/>
            <person name="Basham D."/>
            <person name="Bowman S."/>
            <person name="Brooks K."/>
            <person name="Brown D."/>
            <person name="Brown S."/>
            <person name="Chillingworth T."/>
            <person name="Churcher C.M."/>
            <person name="Collins M."/>
            <person name="Connor R."/>
            <person name="Cronin A."/>
            <person name="Davis P."/>
            <person name="Feltwell T."/>
            <person name="Fraser A."/>
            <person name="Gentles S."/>
            <person name="Goble A."/>
            <person name="Hamlin N."/>
            <person name="Harris D.E."/>
            <person name="Hidalgo J."/>
            <person name="Hodgson G."/>
            <person name="Holroyd S."/>
            <person name="Hornsby T."/>
            <person name="Howarth S."/>
            <person name="Huckle E.J."/>
            <person name="Hunt S."/>
            <person name="Jagels K."/>
            <person name="James K.D."/>
            <person name="Jones L."/>
            <person name="Jones M."/>
            <person name="Leather S."/>
            <person name="McDonald S."/>
            <person name="McLean J."/>
            <person name="Mooney P."/>
            <person name="Moule S."/>
            <person name="Mungall K.L."/>
            <person name="Murphy L.D."/>
            <person name="Niblett D."/>
            <person name="Odell C."/>
            <person name="Oliver K."/>
            <person name="O'Neil S."/>
            <person name="Pearson D."/>
            <person name="Quail M.A."/>
            <person name="Rabbinowitsch E."/>
            <person name="Rutherford K.M."/>
            <person name="Rutter S."/>
            <person name="Saunders D."/>
            <person name="Seeger K."/>
            <person name="Sharp S."/>
            <person name="Skelton J."/>
            <person name="Simmonds M.N."/>
            <person name="Squares R."/>
            <person name="Squares S."/>
            <person name="Stevens K."/>
            <person name="Taylor K."/>
            <person name="Taylor R.G."/>
            <person name="Tivey A."/>
            <person name="Walsh S.V."/>
            <person name="Warren T."/>
            <person name="Whitehead S."/>
            <person name="Woodward J.R."/>
            <person name="Volckaert G."/>
            <person name="Aert R."/>
            <person name="Robben J."/>
            <person name="Grymonprez B."/>
            <person name="Weltjens I."/>
            <person name="Vanstreels E."/>
            <person name="Rieger M."/>
            <person name="Schaefer M."/>
            <person name="Mueller-Auer S."/>
            <person name="Gabel C."/>
            <person name="Fuchs M."/>
            <person name="Duesterhoeft A."/>
            <person name="Fritzc C."/>
            <person name="Holzer E."/>
            <person name="Moestl D."/>
            <person name="Hilbert H."/>
            <person name="Borzym K."/>
            <person name="Langer I."/>
            <person name="Beck A."/>
            <person name="Lehrach H."/>
            <person name="Reinhardt R."/>
            <person name="Pohl T.M."/>
            <person name="Eger P."/>
            <person name="Zimmermann W."/>
            <person name="Wedler H."/>
            <person name="Wambutt R."/>
            <person name="Purnelle B."/>
            <person name="Goffeau A."/>
            <person name="Cadieu E."/>
            <person name="Dreano S."/>
            <person name="Gloux S."/>
            <person name="Lelaure V."/>
            <person name="Mottier S."/>
            <person name="Galibert F."/>
            <person name="Aves S.J."/>
            <person name="Xiang Z."/>
            <person name="Hunt C."/>
            <person name="Moore K."/>
            <person name="Hurst S.M."/>
            <person name="Lucas M."/>
            <person name="Rochet M."/>
            <person name="Gaillardin C."/>
            <person name="Tallada V.A."/>
            <person name="Garzon A."/>
            <person name="Thode G."/>
            <person name="Daga R.R."/>
            <person name="Cruzado L."/>
            <person name="Jimenez J."/>
            <person name="Sanchez M."/>
            <person name="del Rey F."/>
            <person name="Benito J."/>
            <person name="Dominguez A."/>
            <person name="Revuelta J.L."/>
            <person name="Moreno S."/>
            <person name="Armstrong J."/>
            <person name="Forsburg S.L."/>
            <person name="Cerutti L."/>
            <person name="Lowe T."/>
            <person name="McCombie W.R."/>
            <person name="Paulsen I."/>
            <person name="Potashkin J."/>
            <person name="Shpakovski G.V."/>
            <person name="Ussery D."/>
            <person name="Barrell B.G."/>
            <person name="Nurse P."/>
        </authorList>
    </citation>
    <scope>NUCLEOTIDE SEQUENCE [LARGE SCALE GENOMIC DNA]</scope>
    <source>
        <strain>972 / ATCC 24843</strain>
    </source>
</reference>
<gene>
    <name evidence="4" type="primary">dph2</name>
    <name evidence="4" type="ORF">SPBC17D1.02</name>
</gene>
<accession>Q10206</accession>
<protein>
    <recommendedName>
        <fullName evidence="3">2-(3-amino-3-carboxypropyl)histidine synthase subunit 2</fullName>
    </recommendedName>
    <alternativeName>
        <fullName>Diphthamide biosynthesis protein 2</fullName>
    </alternativeName>
    <alternativeName>
        <fullName evidence="3">Diphtheria toxin resistance protein 2</fullName>
    </alternativeName>
    <alternativeName>
        <fullName evidence="3">S-adenosyl-L-methionine:L-histidine 3-amino-3-carboxypropyltransferase 2</fullName>
    </alternativeName>
</protein>
<name>DPH2_SCHPO</name>
<sequence length="503" mass="55635">MSFELSAPVPLSDNSEAILEKEIGETVKIEGDLVEVYEINRTVDFIKSGNYNSVALQFPDEHLADSGKVASILTNLVEANVQILADTNYGSCCVDEVAAEHMSADAIVHYGRACLSPTSRLPVLYVFGRLPINLHKLEKCLTIPLDQNILLVSDTRWYYAQDSILKSLKTLGYQNVYESHLKERIEPNLEEASTSYTIPGRTYSLPKSLSLQDMTLLYIGPDSPTLSSILMSHYSLVNQFLSFDPLSNKIVEESSFTGAKLRRRYALVQRCRDAGVIGIVIGTLGVHRYLHVLNQLRKMILNAGKKPYMLAVGKLNPAKLANFQEIECFVLIACGENSLIDSKEFYRPIVTPFELVKALSSDMSWNNDFILSFDEVLKLSEGKQSKEPSEVLTEESAEPHFSLITGKFVNSTPMRHLDVTLETADAKNNDSSSASIEKRGMRSLAVNGVYSPAAAFLQSKSWSGLDSVDEGEGPSKLYEGQSGIAKGYVGEGSKEKIQRDFGK</sequence>
<feature type="chain" id="PRO_0000083392" description="2-(3-amino-3-carboxypropyl)histidine synthase subunit 2">
    <location>
        <begin position="1"/>
        <end position="503"/>
    </location>
</feature>
<feature type="region of interest" description="Disordered" evidence="2">
    <location>
        <begin position="464"/>
        <end position="503"/>
    </location>
</feature>
<feature type="compositionally biased region" description="Basic and acidic residues" evidence="2">
    <location>
        <begin position="492"/>
        <end position="503"/>
    </location>
</feature>
<feature type="binding site" evidence="1">
    <location>
        <position position="93"/>
    </location>
    <ligand>
        <name>[4Fe-4S] cluster</name>
        <dbReference type="ChEBI" id="CHEBI:49883"/>
    </ligand>
</feature>
<feature type="binding site" evidence="1">
    <location>
        <position position="114"/>
    </location>
    <ligand>
        <name>[4Fe-4S] cluster</name>
        <dbReference type="ChEBI" id="CHEBI:49883"/>
    </ligand>
</feature>
<feature type="binding site" evidence="1">
    <location>
        <position position="334"/>
    </location>
    <ligand>
        <name>[4Fe-4S] cluster</name>
        <dbReference type="ChEBI" id="CHEBI:49883"/>
    </ligand>
</feature>
<organism>
    <name type="scientific">Schizosaccharomyces pombe (strain 972 / ATCC 24843)</name>
    <name type="common">Fission yeast</name>
    <dbReference type="NCBI Taxonomy" id="284812"/>
    <lineage>
        <taxon>Eukaryota</taxon>
        <taxon>Fungi</taxon>
        <taxon>Dikarya</taxon>
        <taxon>Ascomycota</taxon>
        <taxon>Taphrinomycotina</taxon>
        <taxon>Schizosaccharomycetes</taxon>
        <taxon>Schizosaccharomycetales</taxon>
        <taxon>Schizosaccharomycetaceae</taxon>
        <taxon>Schizosaccharomyces</taxon>
    </lineage>
</organism>
<evidence type="ECO:0000250" key="1">
    <source>
        <dbReference type="UniProtKB" id="P32461"/>
    </source>
</evidence>
<evidence type="ECO:0000256" key="2">
    <source>
        <dbReference type="SAM" id="MobiDB-lite"/>
    </source>
</evidence>
<evidence type="ECO:0000305" key="3"/>
<evidence type="ECO:0000312" key="4">
    <source>
        <dbReference type="PomBase" id="SPBC17D1.02"/>
    </source>
</evidence>